<keyword id="KW-0012">Acyltransferase</keyword>
<keyword id="KW-0963">Cytoplasm</keyword>
<keyword id="KW-0539">Nucleus</keyword>
<keyword id="KW-1185">Reference proteome</keyword>
<keyword id="KW-0808">Transferase</keyword>
<feature type="chain" id="PRO_0000284906" description="N-alpha-acetyltransferase 50">
    <location>
        <begin position="1"/>
        <end position="170"/>
    </location>
</feature>
<feature type="domain" description="N-acetyltransferase" evidence="3">
    <location>
        <begin position="6"/>
        <end position="155"/>
    </location>
</feature>
<feature type="region of interest" description="Substrate" evidence="2">
    <location>
        <begin position="138"/>
        <end position="141"/>
    </location>
</feature>
<feature type="active site" evidence="2">
    <location>
        <position position="73"/>
    </location>
</feature>
<feature type="active site" evidence="2">
    <location>
        <position position="112"/>
    </location>
</feature>
<feature type="binding site" evidence="2">
    <location>
        <position position="31"/>
    </location>
    <ligand>
        <name>substrate</name>
    </ligand>
</feature>
<feature type="binding site" evidence="2">
    <location>
        <position position="75"/>
    </location>
    <ligand>
        <name>substrate</name>
    </ligand>
</feature>
<feature type="binding site" evidence="2">
    <location>
        <begin position="77"/>
        <end position="90"/>
    </location>
    <ligand>
        <name>acetyl-CoA</name>
        <dbReference type="ChEBI" id="CHEBI:57288"/>
    </ligand>
</feature>
<feature type="binding site" evidence="1">
    <location>
        <begin position="79"/>
        <end position="90"/>
    </location>
    <ligand>
        <name>CoA</name>
        <dbReference type="ChEBI" id="CHEBI:57287"/>
    </ligand>
</feature>
<feature type="binding site" evidence="2">
    <location>
        <begin position="117"/>
        <end position="126"/>
    </location>
    <ligand>
        <name>CoA</name>
        <dbReference type="ChEBI" id="CHEBI:57287"/>
    </ligand>
</feature>
<proteinExistence type="evidence at transcript level"/>
<comment type="function">
    <text evidence="2">N-alpha-acetyltransferase that acetylates the N-terminus of proteins that retain their initiating methionine. Has a broad substrate specificity: able to acetylate the initiator methionine of most peptides, except for those with a proline in second position. Also displays N-epsilon-acetyltransferase activity by mediating acetylation of the side chain of specific lysines on proteins. The relevance of N-epsilon-acetyltransferase activity is however unclear. Required for sister chromatid cohesion during mitosis by promoting binding of CDCA5/sororin to cohesin.</text>
</comment>
<comment type="catalytic activity">
    <reaction evidence="2">
        <text>N-terminal L-methionyl-L-alanyl-[protein] + acetyl-CoA = N-terminal N(alpha)-acetyl-L-methionyl-L-alanyl-[protein] + CoA + H(+)</text>
        <dbReference type="Rhea" id="RHEA:50564"/>
        <dbReference type="Rhea" id="RHEA-COMP:12726"/>
        <dbReference type="Rhea" id="RHEA-COMP:12727"/>
        <dbReference type="ChEBI" id="CHEBI:15378"/>
        <dbReference type="ChEBI" id="CHEBI:57287"/>
        <dbReference type="ChEBI" id="CHEBI:57288"/>
        <dbReference type="ChEBI" id="CHEBI:133398"/>
        <dbReference type="ChEBI" id="CHEBI:133399"/>
        <dbReference type="EC" id="2.3.1.258"/>
    </reaction>
</comment>
<comment type="catalytic activity">
    <reaction evidence="2">
        <text>N-terminal L-methionyl-L-seryl-[protein] + acetyl-CoA = N-terminal N(alpha)-acetyl-L-methionyl-L-seryl-[protein] + CoA + H(+)</text>
        <dbReference type="Rhea" id="RHEA:50568"/>
        <dbReference type="Rhea" id="RHEA-COMP:12728"/>
        <dbReference type="Rhea" id="RHEA-COMP:12729"/>
        <dbReference type="ChEBI" id="CHEBI:15378"/>
        <dbReference type="ChEBI" id="CHEBI:57287"/>
        <dbReference type="ChEBI" id="CHEBI:57288"/>
        <dbReference type="ChEBI" id="CHEBI:133400"/>
        <dbReference type="ChEBI" id="CHEBI:133401"/>
        <dbReference type="EC" id="2.3.1.258"/>
    </reaction>
</comment>
<comment type="catalytic activity">
    <reaction evidence="2">
        <text>N-terminal L-methionyl-L-valyl-[protein] + acetyl-CoA = N-terminal N(alpha)-acetyl-L-methionyl-L-valyl-[protein] + CoA + H(+)</text>
        <dbReference type="Rhea" id="RHEA:50572"/>
        <dbReference type="Rhea" id="RHEA-COMP:12730"/>
        <dbReference type="Rhea" id="RHEA-COMP:12731"/>
        <dbReference type="ChEBI" id="CHEBI:15378"/>
        <dbReference type="ChEBI" id="CHEBI:57287"/>
        <dbReference type="ChEBI" id="CHEBI:57288"/>
        <dbReference type="ChEBI" id="CHEBI:133402"/>
        <dbReference type="ChEBI" id="CHEBI:133403"/>
        <dbReference type="EC" id="2.3.1.258"/>
    </reaction>
</comment>
<comment type="catalytic activity">
    <reaction evidence="2">
        <text>N-terminal L-methionyl-L-threonyl-[protein] + acetyl-CoA = N-terminal N(alpha)-acetyl-L-methionyl-L-threonyl-[protein] + CoA + H(+)</text>
        <dbReference type="Rhea" id="RHEA:50576"/>
        <dbReference type="Rhea" id="RHEA-COMP:12732"/>
        <dbReference type="Rhea" id="RHEA-COMP:12733"/>
        <dbReference type="ChEBI" id="CHEBI:15378"/>
        <dbReference type="ChEBI" id="CHEBI:57287"/>
        <dbReference type="ChEBI" id="CHEBI:57288"/>
        <dbReference type="ChEBI" id="CHEBI:133404"/>
        <dbReference type="ChEBI" id="CHEBI:133405"/>
        <dbReference type="EC" id="2.3.1.258"/>
    </reaction>
</comment>
<comment type="catalytic activity">
    <reaction evidence="2">
        <text>N-terminal L-methionyl-L-lysyl-[protein] + acetyl-CoA = N-terminal N(alpha)-acetyl-L-methionyl-L-lysyl-[protein] + CoA + H(+)</text>
        <dbReference type="Rhea" id="RHEA:50580"/>
        <dbReference type="Rhea" id="RHEA-COMP:12734"/>
        <dbReference type="Rhea" id="RHEA-COMP:12735"/>
        <dbReference type="ChEBI" id="CHEBI:15378"/>
        <dbReference type="ChEBI" id="CHEBI:57287"/>
        <dbReference type="ChEBI" id="CHEBI:57288"/>
        <dbReference type="ChEBI" id="CHEBI:133406"/>
        <dbReference type="ChEBI" id="CHEBI:133407"/>
        <dbReference type="EC" id="2.3.1.258"/>
    </reaction>
</comment>
<comment type="catalytic activity">
    <reaction evidence="2">
        <text>N-terminal L-methionyl-L-leucyl-[protein] + acetyl-CoA = N-terminal N(alpha)-acetyl-L-methionyl-L-leucyl-[protein] + CoA + H(+)</text>
        <dbReference type="Rhea" id="RHEA:50520"/>
        <dbReference type="Rhea" id="RHEA-COMP:12711"/>
        <dbReference type="Rhea" id="RHEA-COMP:12712"/>
        <dbReference type="ChEBI" id="CHEBI:15378"/>
        <dbReference type="ChEBI" id="CHEBI:57287"/>
        <dbReference type="ChEBI" id="CHEBI:57288"/>
        <dbReference type="ChEBI" id="CHEBI:133377"/>
        <dbReference type="ChEBI" id="CHEBI:133378"/>
        <dbReference type="EC" id="2.3.1.258"/>
    </reaction>
</comment>
<comment type="catalytic activity">
    <reaction evidence="2">
        <text>N-terminal L-methionyl-L-phenylalanyl-[protein] + acetyl-CoA = N-terminal N(alpha)-acetyl-L-methionyl-L-phenylalanyl-[protein] + CoA + H(+)</text>
        <dbReference type="Rhea" id="RHEA:50528"/>
        <dbReference type="Rhea" id="RHEA-COMP:12715"/>
        <dbReference type="Rhea" id="RHEA-COMP:12716"/>
        <dbReference type="ChEBI" id="CHEBI:15378"/>
        <dbReference type="ChEBI" id="CHEBI:57287"/>
        <dbReference type="ChEBI" id="CHEBI:57288"/>
        <dbReference type="ChEBI" id="CHEBI:133382"/>
        <dbReference type="ChEBI" id="CHEBI:133383"/>
        <dbReference type="EC" id="2.3.1.258"/>
    </reaction>
</comment>
<comment type="catalytic activity">
    <reaction evidence="2">
        <text>N-terminal L-methionyl-L-tyrosyl-[protein] + acetyl-CoA = N-terminal N(alpha)-acetyl-L-methionyl-L-tyrosyl-[protein] + CoA + H(+)</text>
        <dbReference type="Rhea" id="RHEA:50532"/>
        <dbReference type="Rhea" id="RHEA-COMP:12717"/>
        <dbReference type="Rhea" id="RHEA-COMP:12718"/>
        <dbReference type="ChEBI" id="CHEBI:15378"/>
        <dbReference type="ChEBI" id="CHEBI:57287"/>
        <dbReference type="ChEBI" id="CHEBI:57288"/>
        <dbReference type="ChEBI" id="CHEBI:133384"/>
        <dbReference type="ChEBI" id="CHEBI:133385"/>
        <dbReference type="EC" id="2.3.1.258"/>
    </reaction>
</comment>
<comment type="subcellular location">
    <subcellularLocation>
        <location evidence="2">Cytoplasm</location>
    </subcellularLocation>
    <subcellularLocation>
        <location evidence="2">Nucleus</location>
    </subcellularLocation>
    <text evidence="2">Localizes to the cytoplasm in interphase cells.</text>
</comment>
<comment type="similarity">
    <text evidence="4">Belongs to the acetyltransferase family. GNAT subfamily.</text>
</comment>
<reference key="1">
    <citation type="submission" date="2004-06" db="EMBL/GenBank/DDBJ databases">
        <authorList>
            <consortium name="NIH - Xenopus Gene Collection (XGC) project"/>
        </authorList>
    </citation>
    <scope>NUCLEOTIDE SEQUENCE [LARGE SCALE MRNA]</scope>
    <source>
        <tissue>Spleen</tissue>
    </source>
</reference>
<protein>
    <recommendedName>
        <fullName>N-alpha-acetyltransferase 50</fullName>
        <ecNumber evidence="2">2.3.1.258</ecNumber>
    </recommendedName>
    <alternativeName>
        <fullName>N-acetyltransferase NAT13</fullName>
    </alternativeName>
    <alternativeName>
        <fullName evidence="2">N-epsilon-acetyltransferase 50</fullName>
        <ecNumber evidence="2">2.3.1.-</ecNumber>
    </alternativeName>
    <alternativeName>
        <fullName>NatE catalytic subunit</fullName>
    </alternativeName>
</protein>
<organism>
    <name type="scientific">Xenopus laevis</name>
    <name type="common">African clawed frog</name>
    <dbReference type="NCBI Taxonomy" id="8355"/>
    <lineage>
        <taxon>Eukaryota</taxon>
        <taxon>Metazoa</taxon>
        <taxon>Chordata</taxon>
        <taxon>Craniata</taxon>
        <taxon>Vertebrata</taxon>
        <taxon>Euteleostomi</taxon>
        <taxon>Amphibia</taxon>
        <taxon>Batrachia</taxon>
        <taxon>Anura</taxon>
        <taxon>Pipoidea</taxon>
        <taxon>Pipidae</taxon>
        <taxon>Xenopodinae</taxon>
        <taxon>Xenopus</taxon>
        <taxon>Xenopus</taxon>
    </lineage>
</organism>
<sequence length="170" mass="19499">MKGSRIELGDVTPHNIKQLKRLNQVIFPVSYNDKFYKDVLEVGELAKLAYFNDIAVGAVCCRVDHSQNQKRLYIMTLGCLAPYRRLGIGTKMLNHVLNICEKDGTFDNIYLHVQISNESAIDFYRKFGFEIIETKKNYYKRIEPADAHVLQKNLKISSPGQNADVQKSEN</sequence>
<dbReference type="EC" id="2.3.1.258" evidence="2"/>
<dbReference type="EC" id="2.3.1.-" evidence="2"/>
<dbReference type="EMBL" id="BC073291">
    <property type="protein sequence ID" value="AAH73291.1"/>
    <property type="molecule type" value="mRNA"/>
</dbReference>
<dbReference type="RefSeq" id="NP_001085750.1">
    <property type="nucleotide sequence ID" value="NM_001092281.1"/>
</dbReference>
<dbReference type="SMR" id="Q6GP53"/>
<dbReference type="DNASU" id="444177"/>
<dbReference type="GeneID" id="444177"/>
<dbReference type="KEGG" id="xla:444177"/>
<dbReference type="AGR" id="Xenbase:XB-GENE-996007"/>
<dbReference type="CTD" id="444177"/>
<dbReference type="Xenbase" id="XB-GENE-996007">
    <property type="gene designation" value="naa50.S"/>
</dbReference>
<dbReference type="OrthoDB" id="47374at2759"/>
<dbReference type="Proteomes" id="UP000186698">
    <property type="component" value="Chromosome 2S"/>
</dbReference>
<dbReference type="Bgee" id="444177">
    <property type="expression patterns" value="Expressed in blastula and 19 other cell types or tissues"/>
</dbReference>
<dbReference type="GO" id="GO:0005737">
    <property type="term" value="C:cytoplasm"/>
    <property type="evidence" value="ECO:0000250"/>
    <property type="project" value="UniProtKB"/>
</dbReference>
<dbReference type="GO" id="GO:0005829">
    <property type="term" value="C:cytosol"/>
    <property type="evidence" value="ECO:0000250"/>
    <property type="project" value="UniProtKB"/>
</dbReference>
<dbReference type="GO" id="GO:0031415">
    <property type="term" value="C:NatA complex"/>
    <property type="evidence" value="ECO:0000318"/>
    <property type="project" value="GO_Central"/>
</dbReference>
<dbReference type="GO" id="GO:0005634">
    <property type="term" value="C:nucleus"/>
    <property type="evidence" value="ECO:0000250"/>
    <property type="project" value="UniProtKB"/>
</dbReference>
<dbReference type="GO" id="GO:0010485">
    <property type="term" value="F:histone H4 acetyltransferase activity"/>
    <property type="evidence" value="ECO:0000250"/>
    <property type="project" value="UniProtKB"/>
</dbReference>
<dbReference type="GO" id="GO:0120518">
    <property type="term" value="F:protein N-terminal-methionine acetyltransferase activity"/>
    <property type="evidence" value="ECO:0007669"/>
    <property type="project" value="UniProtKB-EC"/>
</dbReference>
<dbReference type="GO" id="GO:0061733">
    <property type="term" value="F:protein-lysine-acetyltransferase activity"/>
    <property type="evidence" value="ECO:0000250"/>
    <property type="project" value="UniProtKB"/>
</dbReference>
<dbReference type="GO" id="GO:0004596">
    <property type="term" value="F:protein-N-terminal amino-acid acetyltransferase activity"/>
    <property type="evidence" value="ECO:0000250"/>
    <property type="project" value="UniProtKB"/>
</dbReference>
<dbReference type="GO" id="GO:0034087">
    <property type="term" value="P:establishment of mitotic sister chromatid cohesion"/>
    <property type="evidence" value="ECO:0000250"/>
    <property type="project" value="UniProtKB"/>
</dbReference>
<dbReference type="GO" id="GO:0007064">
    <property type="term" value="P:mitotic sister chromatid cohesion"/>
    <property type="evidence" value="ECO:0000318"/>
    <property type="project" value="GO_Central"/>
</dbReference>
<dbReference type="GO" id="GO:0071962">
    <property type="term" value="P:mitotic sister chromatid cohesion, centromeric"/>
    <property type="evidence" value="ECO:0000250"/>
    <property type="project" value="UniProtKB"/>
</dbReference>
<dbReference type="GO" id="GO:0006474">
    <property type="term" value="P:N-terminal protein amino acid acetylation"/>
    <property type="evidence" value="ECO:0000250"/>
    <property type="project" value="UniProtKB"/>
</dbReference>
<dbReference type="CDD" id="cd04301">
    <property type="entry name" value="NAT_SF"/>
    <property type="match status" value="1"/>
</dbReference>
<dbReference type="FunFam" id="3.40.630.30:FF:000078">
    <property type="entry name" value="N-alpha-acetyltransferase 50"/>
    <property type="match status" value="1"/>
</dbReference>
<dbReference type="Gene3D" id="3.40.630.30">
    <property type="match status" value="1"/>
</dbReference>
<dbReference type="InterPro" id="IPR016181">
    <property type="entry name" value="Acyl_CoA_acyltransferase"/>
</dbReference>
<dbReference type="InterPro" id="IPR000182">
    <property type="entry name" value="GNAT_dom"/>
</dbReference>
<dbReference type="InterPro" id="IPR051556">
    <property type="entry name" value="N-term/lysine_N-AcTrnsfr"/>
</dbReference>
<dbReference type="PANTHER" id="PTHR42919">
    <property type="entry name" value="N-ALPHA-ACETYLTRANSFERASE"/>
    <property type="match status" value="1"/>
</dbReference>
<dbReference type="PANTHER" id="PTHR42919:SF8">
    <property type="entry name" value="N-ALPHA-ACETYLTRANSFERASE 50"/>
    <property type="match status" value="1"/>
</dbReference>
<dbReference type="Pfam" id="PF00583">
    <property type="entry name" value="Acetyltransf_1"/>
    <property type="match status" value="1"/>
</dbReference>
<dbReference type="SUPFAM" id="SSF55729">
    <property type="entry name" value="Acyl-CoA N-acyltransferases (Nat)"/>
    <property type="match status" value="1"/>
</dbReference>
<dbReference type="PROSITE" id="PS51186">
    <property type="entry name" value="GNAT"/>
    <property type="match status" value="1"/>
</dbReference>
<gene>
    <name type="primary">naa50</name>
    <name type="synonym">nat13</name>
</gene>
<name>NAA50_XENLA</name>
<accession>Q6GP53</accession>
<evidence type="ECO:0000250" key="1"/>
<evidence type="ECO:0000250" key="2">
    <source>
        <dbReference type="UniProtKB" id="Q9GZZ1"/>
    </source>
</evidence>
<evidence type="ECO:0000255" key="3">
    <source>
        <dbReference type="PROSITE-ProRule" id="PRU00532"/>
    </source>
</evidence>
<evidence type="ECO:0000305" key="4"/>